<comment type="function">
    <text evidence="1">Catalyzes the conversion of urocanate to 4-imidazolone-5-propionate.</text>
</comment>
<comment type="catalytic activity">
    <reaction evidence="1">
        <text>4-imidazolone-5-propanoate = trans-urocanate + H2O</text>
        <dbReference type="Rhea" id="RHEA:13101"/>
        <dbReference type="ChEBI" id="CHEBI:15377"/>
        <dbReference type="ChEBI" id="CHEBI:17771"/>
        <dbReference type="ChEBI" id="CHEBI:77893"/>
        <dbReference type="EC" id="4.2.1.49"/>
    </reaction>
</comment>
<comment type="cofactor">
    <cofactor evidence="1">
        <name>NAD(+)</name>
        <dbReference type="ChEBI" id="CHEBI:57540"/>
    </cofactor>
    <text evidence="1">Binds 1 NAD(+) per subunit.</text>
</comment>
<comment type="pathway">
    <text evidence="1">Amino-acid degradation; L-histidine degradation into L-glutamate; N-formimidoyl-L-glutamate from L-histidine: step 2/3.</text>
</comment>
<comment type="subcellular location">
    <subcellularLocation>
        <location evidence="1">Cytoplasm</location>
    </subcellularLocation>
</comment>
<comment type="similarity">
    <text evidence="1">Belongs to the urocanase family.</text>
</comment>
<gene>
    <name evidence="1" type="primary">hutU</name>
    <name type="ordered locus">ABC3330</name>
</gene>
<keyword id="KW-0963">Cytoplasm</keyword>
<keyword id="KW-0369">Histidine metabolism</keyword>
<keyword id="KW-0456">Lyase</keyword>
<keyword id="KW-0520">NAD</keyword>
<keyword id="KW-1185">Reference proteome</keyword>
<accession>Q5WCP7</accession>
<feature type="chain" id="PRO_1000025120" description="Urocanate hydratase">
    <location>
        <begin position="1"/>
        <end position="559"/>
    </location>
</feature>
<feature type="active site" evidence="1">
    <location>
        <position position="407"/>
    </location>
</feature>
<feature type="binding site" evidence="1">
    <location>
        <begin position="49"/>
        <end position="50"/>
    </location>
    <ligand>
        <name>NAD(+)</name>
        <dbReference type="ChEBI" id="CHEBI:57540"/>
    </ligand>
</feature>
<feature type="binding site" evidence="1">
    <location>
        <position position="127"/>
    </location>
    <ligand>
        <name>NAD(+)</name>
        <dbReference type="ChEBI" id="CHEBI:57540"/>
    </ligand>
</feature>
<feature type="binding site" evidence="1">
    <location>
        <begin position="173"/>
        <end position="175"/>
    </location>
    <ligand>
        <name>NAD(+)</name>
        <dbReference type="ChEBI" id="CHEBI:57540"/>
    </ligand>
</feature>
<feature type="binding site" evidence="1">
    <location>
        <position position="193"/>
    </location>
    <ligand>
        <name>NAD(+)</name>
        <dbReference type="ChEBI" id="CHEBI:57540"/>
    </ligand>
</feature>
<feature type="binding site" evidence="1">
    <location>
        <position position="198"/>
    </location>
    <ligand>
        <name>NAD(+)</name>
        <dbReference type="ChEBI" id="CHEBI:57540"/>
    </ligand>
</feature>
<feature type="binding site" evidence="1">
    <location>
        <begin position="239"/>
        <end position="240"/>
    </location>
    <ligand>
        <name>NAD(+)</name>
        <dbReference type="ChEBI" id="CHEBI:57540"/>
    </ligand>
</feature>
<feature type="binding site" evidence="1">
    <location>
        <begin position="260"/>
        <end position="264"/>
    </location>
    <ligand>
        <name>NAD(+)</name>
        <dbReference type="ChEBI" id="CHEBI:57540"/>
    </ligand>
</feature>
<feature type="binding site" evidence="1">
    <location>
        <begin position="270"/>
        <end position="271"/>
    </location>
    <ligand>
        <name>NAD(+)</name>
        <dbReference type="ChEBI" id="CHEBI:57540"/>
    </ligand>
</feature>
<feature type="binding site" evidence="1">
    <location>
        <position position="319"/>
    </location>
    <ligand>
        <name>NAD(+)</name>
        <dbReference type="ChEBI" id="CHEBI:57540"/>
    </ligand>
</feature>
<feature type="binding site" evidence="1">
    <location>
        <position position="489"/>
    </location>
    <ligand>
        <name>NAD(+)</name>
        <dbReference type="ChEBI" id="CHEBI:57540"/>
    </ligand>
</feature>
<evidence type="ECO:0000255" key="1">
    <source>
        <dbReference type="HAMAP-Rule" id="MF_00577"/>
    </source>
</evidence>
<protein>
    <recommendedName>
        <fullName evidence="1">Urocanate hydratase</fullName>
        <shortName evidence="1">Urocanase</shortName>
        <ecNumber evidence="1">4.2.1.49</ecNumber>
    </recommendedName>
    <alternativeName>
        <fullName evidence="1">Imidazolonepropionate hydrolase</fullName>
    </alternativeName>
</protein>
<reference key="1">
    <citation type="submission" date="2003-10" db="EMBL/GenBank/DDBJ databases">
        <title>The complete genome sequence of the alkaliphilic Bacillus clausii KSM-K16.</title>
        <authorList>
            <person name="Takaki Y."/>
            <person name="Kageyama Y."/>
            <person name="Shimamura S."/>
            <person name="Suzuki H."/>
            <person name="Nishi S."/>
            <person name="Hatada Y."/>
            <person name="Kawai S."/>
            <person name="Ito S."/>
            <person name="Horikoshi K."/>
        </authorList>
    </citation>
    <scope>NUCLEOTIDE SEQUENCE [LARGE SCALE GENOMIC DNA]</scope>
    <source>
        <strain>KSM-K16</strain>
    </source>
</reference>
<name>HUTU_SHOC1</name>
<dbReference type="EC" id="4.2.1.49" evidence="1"/>
<dbReference type="EMBL" id="AP006627">
    <property type="protein sequence ID" value="BAD65863.1"/>
    <property type="molecule type" value="Genomic_DNA"/>
</dbReference>
<dbReference type="RefSeq" id="WP_011248169.1">
    <property type="nucleotide sequence ID" value="NC_006582.1"/>
</dbReference>
<dbReference type="SMR" id="Q5WCP7"/>
<dbReference type="STRING" id="66692.ABC3330"/>
<dbReference type="KEGG" id="bcl:ABC3330"/>
<dbReference type="eggNOG" id="COG2987">
    <property type="taxonomic scope" value="Bacteria"/>
</dbReference>
<dbReference type="HOGENOM" id="CLU_018868_0_1_9"/>
<dbReference type="OrthoDB" id="9764874at2"/>
<dbReference type="UniPathway" id="UPA00379">
    <property type="reaction ID" value="UER00550"/>
</dbReference>
<dbReference type="Proteomes" id="UP000001168">
    <property type="component" value="Chromosome"/>
</dbReference>
<dbReference type="GO" id="GO:0005737">
    <property type="term" value="C:cytoplasm"/>
    <property type="evidence" value="ECO:0007669"/>
    <property type="project" value="UniProtKB-SubCell"/>
</dbReference>
<dbReference type="GO" id="GO:0016153">
    <property type="term" value="F:urocanate hydratase activity"/>
    <property type="evidence" value="ECO:0007669"/>
    <property type="project" value="UniProtKB-UniRule"/>
</dbReference>
<dbReference type="GO" id="GO:0019556">
    <property type="term" value="P:L-histidine catabolic process to glutamate and formamide"/>
    <property type="evidence" value="ECO:0007669"/>
    <property type="project" value="UniProtKB-UniPathway"/>
</dbReference>
<dbReference type="GO" id="GO:0019557">
    <property type="term" value="P:L-histidine catabolic process to glutamate and formate"/>
    <property type="evidence" value="ECO:0007669"/>
    <property type="project" value="UniProtKB-UniPathway"/>
</dbReference>
<dbReference type="FunFam" id="3.40.50.10730:FF:000001">
    <property type="entry name" value="Urocanate hydratase"/>
    <property type="match status" value="1"/>
</dbReference>
<dbReference type="Gene3D" id="3.40.50.10730">
    <property type="entry name" value="Urocanase like domains"/>
    <property type="match status" value="1"/>
</dbReference>
<dbReference type="Gene3D" id="3.40.1770.10">
    <property type="entry name" value="Urocanase superfamily"/>
    <property type="match status" value="1"/>
</dbReference>
<dbReference type="HAMAP" id="MF_00577">
    <property type="entry name" value="HutU"/>
    <property type="match status" value="1"/>
</dbReference>
<dbReference type="InterPro" id="IPR055351">
    <property type="entry name" value="Urocanase"/>
</dbReference>
<dbReference type="InterPro" id="IPR023637">
    <property type="entry name" value="Urocanase-like"/>
</dbReference>
<dbReference type="InterPro" id="IPR035401">
    <property type="entry name" value="Urocanase_C"/>
</dbReference>
<dbReference type="InterPro" id="IPR038364">
    <property type="entry name" value="Urocanase_central_sf"/>
</dbReference>
<dbReference type="InterPro" id="IPR023636">
    <property type="entry name" value="Urocanase_CS"/>
</dbReference>
<dbReference type="InterPro" id="IPR035400">
    <property type="entry name" value="Urocanase_N"/>
</dbReference>
<dbReference type="InterPro" id="IPR035085">
    <property type="entry name" value="Urocanase_Rossmann-like"/>
</dbReference>
<dbReference type="InterPro" id="IPR036190">
    <property type="entry name" value="Urocanase_sf"/>
</dbReference>
<dbReference type="NCBIfam" id="TIGR01228">
    <property type="entry name" value="hutU"/>
    <property type="match status" value="1"/>
</dbReference>
<dbReference type="NCBIfam" id="NF003820">
    <property type="entry name" value="PRK05414.1"/>
    <property type="match status" value="1"/>
</dbReference>
<dbReference type="PANTHER" id="PTHR12216">
    <property type="entry name" value="UROCANATE HYDRATASE"/>
    <property type="match status" value="1"/>
</dbReference>
<dbReference type="PANTHER" id="PTHR12216:SF4">
    <property type="entry name" value="UROCANATE HYDRATASE"/>
    <property type="match status" value="1"/>
</dbReference>
<dbReference type="Pfam" id="PF01175">
    <property type="entry name" value="Urocanase"/>
    <property type="match status" value="1"/>
</dbReference>
<dbReference type="Pfam" id="PF17392">
    <property type="entry name" value="Urocanase_C"/>
    <property type="match status" value="1"/>
</dbReference>
<dbReference type="Pfam" id="PF17391">
    <property type="entry name" value="Urocanase_N"/>
    <property type="match status" value="1"/>
</dbReference>
<dbReference type="PIRSF" id="PIRSF001423">
    <property type="entry name" value="Urocanate_hydrat"/>
    <property type="match status" value="1"/>
</dbReference>
<dbReference type="SUPFAM" id="SSF111326">
    <property type="entry name" value="Urocanase"/>
    <property type="match status" value="1"/>
</dbReference>
<dbReference type="PROSITE" id="PS01233">
    <property type="entry name" value="UROCANASE"/>
    <property type="match status" value="1"/>
</dbReference>
<sequence>MNLNNEPIRAKRGTALTAKGWVQEAALRMLMNNLDEEVAEHPDQLVVYGGIGKAARNWPSYHSIVSSLTTLDNDETLLIQSGKPVAVFKTHEDAPRVLLANSNLVPAWANWETFHELDKKGLTMYGQMTAGSWIYIGSQGIVQGTYETFAECARQHFGGSLKGTITVTAGLGGMGGAQPLAVTMANGVAICVDVDRSRIDKRMETNYLDIVAHTLTEAIEEAELAKKEGIPLSIGLVGNAAEVLPEMLDRGFVPDIVTDQTSAHDPLNGYLPKGFTNEQGQVLRREDPQAYISLAKKSMAEQVEAMLELKKRGAIVFDYGNNIRQVAFDEGIRDAFSFPGFVPAYIRPQFCEGKGPFRWVALSGDPADIDKTDEVILQEFADNEPLCQWIRMARRHISFQGLPARICWLGYGERARFGKRINEMVASGELSAPIVIGRDHLDAGSVASPNRETEAMKDGSDAVADWPILNALVNTAAGASWVSVHHGGGVGMGYSLHAGMVVVADGTAEAARRLERVLTTDPGLGVVRHADAGYQKAIETAKATGIVIPALAREGKENG</sequence>
<organism>
    <name type="scientific">Shouchella clausii (strain KSM-K16)</name>
    <name type="common">Alkalihalobacillus clausii</name>
    <dbReference type="NCBI Taxonomy" id="66692"/>
    <lineage>
        <taxon>Bacteria</taxon>
        <taxon>Bacillati</taxon>
        <taxon>Bacillota</taxon>
        <taxon>Bacilli</taxon>
        <taxon>Bacillales</taxon>
        <taxon>Bacillaceae</taxon>
        <taxon>Shouchella</taxon>
    </lineage>
</organism>
<proteinExistence type="inferred from homology"/>